<protein>
    <recommendedName>
        <fullName evidence="1">NAD-dependent malic enzyme</fullName>
        <shortName evidence="1">NAD-ME</shortName>
        <ecNumber evidence="1">1.1.1.38</ecNumber>
    </recommendedName>
</protein>
<reference key="1">
    <citation type="journal article" date="2005" name="J. Bacteriol.">
        <title>Whole-genome sequence analysis of Pseudomonas syringae pv. phaseolicola 1448A reveals divergence among pathovars in genes involved in virulence and transposition.</title>
        <authorList>
            <person name="Joardar V."/>
            <person name="Lindeberg M."/>
            <person name="Jackson R.W."/>
            <person name="Selengut J."/>
            <person name="Dodson R."/>
            <person name="Brinkac L.M."/>
            <person name="Daugherty S.C."/>
            <person name="DeBoy R.T."/>
            <person name="Durkin A.S."/>
            <person name="Gwinn Giglio M."/>
            <person name="Madupu R."/>
            <person name="Nelson W.C."/>
            <person name="Rosovitz M.J."/>
            <person name="Sullivan S.A."/>
            <person name="Crabtree J."/>
            <person name="Creasy T."/>
            <person name="Davidsen T.M."/>
            <person name="Haft D.H."/>
            <person name="Zafar N."/>
            <person name="Zhou L."/>
            <person name="Halpin R."/>
            <person name="Holley T."/>
            <person name="Khouri H.M."/>
            <person name="Feldblyum T.V."/>
            <person name="White O."/>
            <person name="Fraser C.M."/>
            <person name="Chatterjee A.K."/>
            <person name="Cartinhour S."/>
            <person name="Schneider D."/>
            <person name="Mansfield J.W."/>
            <person name="Collmer A."/>
            <person name="Buell R."/>
        </authorList>
    </citation>
    <scope>NUCLEOTIDE SEQUENCE [LARGE SCALE GENOMIC DNA]</scope>
    <source>
        <strain>1448A / Race 6</strain>
    </source>
</reference>
<sequence length="563" mass="62185">MTKTSRPLYISYAGPSLLEMPLLNKGSAFTPQERVEFNLIGLLPQNVETIEEQVTRVYSQYKQCASDLDKHIYLRSIQDNNETLFFRLLDSHLDEMLPIIYTPTVGQACQEFSKIYRTHRGLFISYPERDRIDDILRSATKDRIKIIVVTDSERILGLGDQGIGGMGIPIGKLSLYTACGGISPAYTLPIVLDVGTNNRELLDDPMYMGWRHERVSGKEYEDFIALFIDAVQRRWPDVLLQFEDFAQSNAMPLLEKYRDELCCFNDDIQGTASVAVGTLLAACKAKNETLGQQKVVFVGAGSAGCGIAEHIIAAMRIEGLSESEARKRIFMVDRFGLLTEGMDNLLDFQKRLAQKTADVSGWTAGTEAFPQLLDVVTNAGATVLIGVSGQRGLFTEQVIRELHKHCAKPLVMPLSNPTSKVEATPEEILRWTDGNALVATGSPFAPVEINGRTVHIAQCNNSYIFPGIGLGVVACKASRITDRMLMAASNALAECSPMVTGQGDAVLPPLKEIQQVSRKIALAVAKEAQAEGLALETSEEALLEAIERNFWLPGYRAYRRRSV</sequence>
<comment type="catalytic activity">
    <reaction evidence="1">
        <text>(S)-malate + NAD(+) = pyruvate + CO2 + NADH</text>
        <dbReference type="Rhea" id="RHEA:12653"/>
        <dbReference type="ChEBI" id="CHEBI:15361"/>
        <dbReference type="ChEBI" id="CHEBI:15589"/>
        <dbReference type="ChEBI" id="CHEBI:16526"/>
        <dbReference type="ChEBI" id="CHEBI:57540"/>
        <dbReference type="ChEBI" id="CHEBI:57945"/>
        <dbReference type="EC" id="1.1.1.38"/>
    </reaction>
</comment>
<comment type="catalytic activity">
    <reaction evidence="1">
        <text>oxaloacetate + H(+) = pyruvate + CO2</text>
        <dbReference type="Rhea" id="RHEA:15641"/>
        <dbReference type="ChEBI" id="CHEBI:15361"/>
        <dbReference type="ChEBI" id="CHEBI:15378"/>
        <dbReference type="ChEBI" id="CHEBI:16452"/>
        <dbReference type="ChEBI" id="CHEBI:16526"/>
        <dbReference type="EC" id="1.1.1.38"/>
    </reaction>
</comment>
<comment type="cofactor">
    <cofactor evidence="1">
        <name>Mg(2+)</name>
        <dbReference type="ChEBI" id="CHEBI:18420"/>
    </cofactor>
    <cofactor evidence="1">
        <name>Mn(2+)</name>
        <dbReference type="ChEBI" id="CHEBI:29035"/>
    </cofactor>
    <text evidence="1">Divalent metal cations. Prefers magnesium or manganese.</text>
</comment>
<comment type="subunit">
    <text evidence="1">Homotetramer.</text>
</comment>
<comment type="similarity">
    <text evidence="1">Belongs to the malic enzymes family.</text>
</comment>
<comment type="sequence caution" evidence="2">
    <conflict type="erroneous initiation">
        <sequence resource="EMBL-CDS" id="AAZ37192"/>
    </conflict>
</comment>
<feature type="chain" id="PRO_0000160223" description="NAD-dependent malic enzyme">
    <location>
        <begin position="1"/>
        <end position="563"/>
    </location>
</feature>
<feature type="active site" description="Proton donor" evidence="1">
    <location>
        <position position="101"/>
    </location>
</feature>
<feature type="active site" description="Proton acceptor" evidence="1">
    <location>
        <position position="172"/>
    </location>
</feature>
<feature type="binding site" evidence="1">
    <location>
        <position position="154"/>
    </location>
    <ligand>
        <name>NAD(+)</name>
        <dbReference type="ChEBI" id="CHEBI:57540"/>
    </ligand>
</feature>
<feature type="binding site" evidence="1">
    <location>
        <position position="243"/>
    </location>
    <ligand>
        <name>a divalent metal cation</name>
        <dbReference type="ChEBI" id="CHEBI:60240"/>
    </ligand>
</feature>
<feature type="binding site" evidence="1">
    <location>
        <position position="244"/>
    </location>
    <ligand>
        <name>a divalent metal cation</name>
        <dbReference type="ChEBI" id="CHEBI:60240"/>
    </ligand>
</feature>
<feature type="binding site" evidence="1">
    <location>
        <position position="267"/>
    </location>
    <ligand>
        <name>a divalent metal cation</name>
        <dbReference type="ChEBI" id="CHEBI:60240"/>
    </ligand>
</feature>
<feature type="binding site" evidence="1">
    <location>
        <position position="267"/>
    </location>
    <ligand>
        <name>NAD(+)</name>
        <dbReference type="ChEBI" id="CHEBI:57540"/>
    </ligand>
</feature>
<feature type="binding site" evidence="1">
    <location>
        <position position="416"/>
    </location>
    <ligand>
        <name>NAD(+)</name>
        <dbReference type="ChEBI" id="CHEBI:57540"/>
    </ligand>
</feature>
<feature type="site" description="Important for activity" evidence="1">
    <location>
        <position position="267"/>
    </location>
</feature>
<dbReference type="EC" id="1.1.1.38" evidence="1"/>
<dbReference type="EMBL" id="CP000058">
    <property type="protein sequence ID" value="AAZ37192.1"/>
    <property type="status" value="ALT_INIT"/>
    <property type="molecule type" value="Genomic_DNA"/>
</dbReference>
<dbReference type="RefSeq" id="WP_005732877.1">
    <property type="nucleotide sequence ID" value="NC_005773.3"/>
</dbReference>
<dbReference type="SMR" id="Q48LC8"/>
<dbReference type="KEGG" id="psp:PSPPH_1545"/>
<dbReference type="eggNOG" id="COG0281">
    <property type="taxonomic scope" value="Bacteria"/>
</dbReference>
<dbReference type="HOGENOM" id="CLU_011405_5_2_6"/>
<dbReference type="Proteomes" id="UP000000551">
    <property type="component" value="Chromosome"/>
</dbReference>
<dbReference type="GO" id="GO:0005829">
    <property type="term" value="C:cytosol"/>
    <property type="evidence" value="ECO:0007669"/>
    <property type="project" value="TreeGrafter"/>
</dbReference>
<dbReference type="GO" id="GO:0004471">
    <property type="term" value="F:malate dehydrogenase (decarboxylating) (NAD+) activity"/>
    <property type="evidence" value="ECO:0007669"/>
    <property type="project" value="UniProtKB-UniRule"/>
</dbReference>
<dbReference type="GO" id="GO:0046872">
    <property type="term" value="F:metal ion binding"/>
    <property type="evidence" value="ECO:0007669"/>
    <property type="project" value="UniProtKB-KW"/>
</dbReference>
<dbReference type="GO" id="GO:0051287">
    <property type="term" value="F:NAD binding"/>
    <property type="evidence" value="ECO:0007669"/>
    <property type="project" value="InterPro"/>
</dbReference>
<dbReference type="GO" id="GO:0008948">
    <property type="term" value="F:oxaloacetate decarboxylase activity"/>
    <property type="evidence" value="ECO:0007669"/>
    <property type="project" value="UniProtKB-UniRule"/>
</dbReference>
<dbReference type="GO" id="GO:0006108">
    <property type="term" value="P:malate metabolic process"/>
    <property type="evidence" value="ECO:0007669"/>
    <property type="project" value="TreeGrafter"/>
</dbReference>
<dbReference type="CDD" id="cd05312">
    <property type="entry name" value="NAD_bind_1_malic_enz"/>
    <property type="match status" value="1"/>
</dbReference>
<dbReference type="FunFam" id="3.40.50.10380:FF:000001">
    <property type="entry name" value="NAD-dependent malic enzyme"/>
    <property type="match status" value="1"/>
</dbReference>
<dbReference type="FunFam" id="3.40.50.720:FF:000055">
    <property type="entry name" value="NAD-dependent malic enzyme"/>
    <property type="match status" value="1"/>
</dbReference>
<dbReference type="Gene3D" id="3.40.50.10380">
    <property type="entry name" value="Malic enzyme, N-terminal domain"/>
    <property type="match status" value="1"/>
</dbReference>
<dbReference type="Gene3D" id="3.40.50.720">
    <property type="entry name" value="NAD(P)-binding Rossmann-like Domain"/>
    <property type="match status" value="1"/>
</dbReference>
<dbReference type="HAMAP" id="MF_01619">
    <property type="entry name" value="NAD_malic_enz"/>
    <property type="match status" value="1"/>
</dbReference>
<dbReference type="InterPro" id="IPR046346">
    <property type="entry name" value="Aminoacid_DH-like_N_sf"/>
</dbReference>
<dbReference type="InterPro" id="IPR015884">
    <property type="entry name" value="Malic_enzyme_CS"/>
</dbReference>
<dbReference type="InterPro" id="IPR012301">
    <property type="entry name" value="Malic_N_dom"/>
</dbReference>
<dbReference type="InterPro" id="IPR037062">
    <property type="entry name" value="Malic_N_dom_sf"/>
</dbReference>
<dbReference type="InterPro" id="IPR012302">
    <property type="entry name" value="Malic_NAD-bd"/>
</dbReference>
<dbReference type="InterPro" id="IPR001891">
    <property type="entry name" value="Malic_OxRdtase"/>
</dbReference>
<dbReference type="InterPro" id="IPR036291">
    <property type="entry name" value="NAD(P)-bd_dom_sf"/>
</dbReference>
<dbReference type="InterPro" id="IPR023667">
    <property type="entry name" value="NAD_malic_enz_proteobac"/>
</dbReference>
<dbReference type="NCBIfam" id="NF010052">
    <property type="entry name" value="PRK13529.1"/>
    <property type="match status" value="1"/>
</dbReference>
<dbReference type="PANTHER" id="PTHR23406">
    <property type="entry name" value="MALIC ENZYME-RELATED"/>
    <property type="match status" value="1"/>
</dbReference>
<dbReference type="PANTHER" id="PTHR23406:SF34">
    <property type="entry name" value="NAD-DEPENDENT MALIC ENZYME, MITOCHONDRIAL"/>
    <property type="match status" value="1"/>
</dbReference>
<dbReference type="Pfam" id="PF00390">
    <property type="entry name" value="malic"/>
    <property type="match status" value="1"/>
</dbReference>
<dbReference type="Pfam" id="PF03949">
    <property type="entry name" value="Malic_M"/>
    <property type="match status" value="1"/>
</dbReference>
<dbReference type="PIRSF" id="PIRSF000106">
    <property type="entry name" value="ME"/>
    <property type="match status" value="1"/>
</dbReference>
<dbReference type="PRINTS" id="PR00072">
    <property type="entry name" value="MALOXRDTASE"/>
</dbReference>
<dbReference type="SMART" id="SM01274">
    <property type="entry name" value="malic"/>
    <property type="match status" value="1"/>
</dbReference>
<dbReference type="SMART" id="SM00919">
    <property type="entry name" value="Malic_M"/>
    <property type="match status" value="1"/>
</dbReference>
<dbReference type="SUPFAM" id="SSF53223">
    <property type="entry name" value="Aminoacid dehydrogenase-like, N-terminal domain"/>
    <property type="match status" value="1"/>
</dbReference>
<dbReference type="SUPFAM" id="SSF51735">
    <property type="entry name" value="NAD(P)-binding Rossmann-fold domains"/>
    <property type="match status" value="1"/>
</dbReference>
<dbReference type="PROSITE" id="PS00331">
    <property type="entry name" value="MALIC_ENZYMES"/>
    <property type="match status" value="1"/>
</dbReference>
<evidence type="ECO:0000255" key="1">
    <source>
        <dbReference type="HAMAP-Rule" id="MF_01619"/>
    </source>
</evidence>
<evidence type="ECO:0000305" key="2"/>
<keyword id="KW-0479">Metal-binding</keyword>
<keyword id="KW-0520">NAD</keyword>
<keyword id="KW-0560">Oxidoreductase</keyword>
<organism>
    <name type="scientific">Pseudomonas savastanoi pv. phaseolicola (strain 1448A / Race 6)</name>
    <name type="common">Pseudomonas syringae pv. phaseolicola (strain 1448A / Race 6)</name>
    <dbReference type="NCBI Taxonomy" id="264730"/>
    <lineage>
        <taxon>Bacteria</taxon>
        <taxon>Pseudomonadati</taxon>
        <taxon>Pseudomonadota</taxon>
        <taxon>Gammaproteobacteria</taxon>
        <taxon>Pseudomonadales</taxon>
        <taxon>Pseudomonadaceae</taxon>
        <taxon>Pseudomonas</taxon>
    </lineage>
</organism>
<gene>
    <name evidence="1" type="primary">maeA</name>
    <name type="ordered locus">PSPPH_1545</name>
</gene>
<name>MAO1_PSE14</name>
<proteinExistence type="inferred from homology"/>
<accession>Q48LC8</accession>